<proteinExistence type="evidence at protein level"/>
<accession>Q93379</accession>
<accession>Q86DB5</accession>
<evidence type="ECO:0000250" key="1">
    <source>
        <dbReference type="UniProtKB" id="P00390"/>
    </source>
</evidence>
<evidence type="ECO:0000255" key="2">
    <source>
        <dbReference type="RuleBase" id="RU003691"/>
    </source>
</evidence>
<evidence type="ECO:0000269" key="3">
    <source>
    </source>
</evidence>
<evidence type="ECO:0000269" key="4">
    <source>
    </source>
</evidence>
<evidence type="ECO:0000305" key="5"/>
<evidence type="ECO:0000305" key="6">
    <source>
    </source>
</evidence>
<evidence type="ECO:0000312" key="7">
    <source>
        <dbReference type="Proteomes" id="UP000001940"/>
    </source>
</evidence>
<evidence type="ECO:0000312" key="8">
    <source>
        <dbReference type="WormBase" id="C46F11.2a"/>
    </source>
</evidence>
<evidence type="ECO:0000312" key="9">
    <source>
        <dbReference type="WormBase" id="C46F11.2b"/>
    </source>
</evidence>
<sequence>MLRFRCILSTSRSIMSGVKEFDYLVIGGGSGGIASARRAREFGVSVGLIESGRLGGTCVNVGCVPKKVMYNCSLHAEFIRDHADYGFDVTLNKFDWKVIKKSRDEYIKRLNGLYESGLKGSSVEYIRGRATFAEDGTVEVNGAKYRGKNTLIAVGGKPTIPNIKGAEHGIDSDGFFDLEDLPSRTVVVGAGYIAVEIAGVLANLGSDTHLLIRYDKVLRTFDKMLSDELTADMDEETNPLHLHKNTQVTEVIKGDDGLLTIKTTTGVIEKVQTLIWAIGRDPLTKELNLERVGVKTDKSGHIIVDEYQNTSAPGILSVGDDTGKFLLTPVAIAAGRRLSHRLFNGETDNKLTYENIATVVFSHPLIGTVGLTEAEAVEKYGKDEVTLYKSRFNPMLFAVTKHKEKAAMKLVCVGKDEKVVGVHVFGVGSDEMLQGFAVAVTMGATKKQFDQTVAIHPTSAEELVTMRGGVKPE</sequence>
<organism evidence="7">
    <name type="scientific">Caenorhabditis elegans</name>
    <dbReference type="NCBI Taxonomy" id="6239"/>
    <lineage>
        <taxon>Eukaryota</taxon>
        <taxon>Metazoa</taxon>
        <taxon>Ecdysozoa</taxon>
        <taxon>Nematoda</taxon>
        <taxon>Chromadorea</taxon>
        <taxon>Rhabditida</taxon>
        <taxon>Rhabditina</taxon>
        <taxon>Rhabditomorpha</taxon>
        <taxon>Rhabditoidea</taxon>
        <taxon>Rhabditidae</taxon>
        <taxon>Peloderinae</taxon>
        <taxon>Caenorhabditis</taxon>
    </lineage>
</organism>
<feature type="transit peptide" description="Mitochondrion" evidence="6">
    <location>
        <begin position="1"/>
        <end status="unknown"/>
    </location>
</feature>
<feature type="chain" id="PRO_0000436306" description="Glutathione reductase, mitochondrial" evidence="5">
    <location>
        <begin status="unknown"/>
        <end position="473"/>
    </location>
</feature>
<feature type="active site" description="Proton acceptor" evidence="1">
    <location>
        <position position="456"/>
    </location>
</feature>
<feature type="binding site" evidence="1">
    <location>
        <position position="30"/>
    </location>
    <ligand>
        <name>FAD</name>
        <dbReference type="ChEBI" id="CHEBI:57692"/>
    </ligand>
</feature>
<feature type="binding site" evidence="1">
    <location>
        <position position="30"/>
    </location>
    <ligand>
        <name>glutathione</name>
        <dbReference type="ChEBI" id="CHEBI:57925"/>
    </ligand>
</feature>
<feature type="binding site" evidence="1">
    <location>
        <position position="31"/>
    </location>
    <ligand>
        <name>FAD</name>
        <dbReference type="ChEBI" id="CHEBI:57692"/>
    </ligand>
</feature>
<feature type="binding site" evidence="1">
    <location>
        <position position="37"/>
    </location>
    <ligand>
        <name>glutathione</name>
        <dbReference type="ChEBI" id="CHEBI:57925"/>
    </ligand>
</feature>
<feature type="binding site" evidence="1">
    <location>
        <position position="50"/>
    </location>
    <ligand>
        <name>FAD</name>
        <dbReference type="ChEBI" id="CHEBI:57692"/>
    </ligand>
</feature>
<feature type="binding site" evidence="1">
    <location>
        <position position="57"/>
    </location>
    <ligand>
        <name>FAD</name>
        <dbReference type="ChEBI" id="CHEBI:57692"/>
    </ligand>
</feature>
<feature type="binding site" evidence="1">
    <location>
        <position position="58"/>
    </location>
    <ligand>
        <name>FAD</name>
        <dbReference type="ChEBI" id="CHEBI:57692"/>
    </ligand>
</feature>
<feature type="binding site" evidence="1">
    <location>
        <position position="66"/>
    </location>
    <ligand>
        <name>FAD</name>
        <dbReference type="ChEBI" id="CHEBI:57692"/>
    </ligand>
</feature>
<feature type="binding site" evidence="1">
    <location>
        <position position="114"/>
    </location>
    <ligand>
        <name>glutathione</name>
        <dbReference type="ChEBI" id="CHEBI:57925"/>
    </ligand>
</feature>
<feature type="binding site" evidence="1">
    <location>
        <position position="130"/>
    </location>
    <ligand>
        <name>FAD</name>
        <dbReference type="ChEBI" id="CHEBI:57692"/>
    </ligand>
</feature>
<feature type="binding site" evidence="1">
    <location>
        <position position="190"/>
    </location>
    <ligand>
        <name>NADP(+)</name>
        <dbReference type="ChEBI" id="CHEBI:58349"/>
    </ligand>
</feature>
<feature type="binding site" evidence="1">
    <location>
        <position position="193"/>
    </location>
    <ligand>
        <name>NADP(+)</name>
        <dbReference type="ChEBI" id="CHEBI:58349"/>
    </ligand>
</feature>
<feature type="binding site" evidence="1">
    <location>
        <position position="196"/>
    </location>
    <ligand>
        <name>NADP(+)</name>
        <dbReference type="ChEBI" id="CHEBI:58349"/>
    </ligand>
</feature>
<feature type="binding site" evidence="1">
    <location>
        <position position="213"/>
    </location>
    <ligand>
        <name>NADP(+)</name>
        <dbReference type="ChEBI" id="CHEBI:58349"/>
    </ligand>
</feature>
<feature type="binding site" evidence="1">
    <location>
        <position position="219"/>
    </location>
    <ligand>
        <name>NADP(+)</name>
        <dbReference type="ChEBI" id="CHEBI:58349"/>
    </ligand>
</feature>
<feature type="binding site" evidence="1">
    <location>
        <position position="279"/>
    </location>
    <ligand>
        <name>NADP(+)</name>
        <dbReference type="ChEBI" id="CHEBI:58349"/>
    </ligand>
</feature>
<feature type="binding site" evidence="1">
    <location>
        <position position="320"/>
    </location>
    <ligand>
        <name>FAD</name>
        <dbReference type="ChEBI" id="CHEBI:57692"/>
    </ligand>
</feature>
<feature type="binding site" evidence="1">
    <location>
        <position position="326"/>
    </location>
    <ligand>
        <name>NADP(+)</name>
        <dbReference type="ChEBI" id="CHEBI:58349"/>
    </ligand>
</feature>
<feature type="binding site" evidence="1">
    <location>
        <position position="328"/>
    </location>
    <ligand>
        <name>FAD</name>
        <dbReference type="ChEBI" id="CHEBI:57692"/>
    </ligand>
</feature>
<feature type="binding site" evidence="1">
    <location>
        <position position="336"/>
    </location>
    <ligand>
        <name>glutathione</name>
        <dbReference type="ChEBI" id="CHEBI:57925"/>
    </ligand>
</feature>
<feature type="binding site" evidence="1">
    <location>
        <position position="359"/>
    </location>
    <ligand>
        <name>NADP(+)</name>
        <dbReference type="ChEBI" id="CHEBI:58349"/>
    </ligand>
</feature>
<feature type="binding site" evidence="1">
    <location>
        <position position="456"/>
    </location>
    <ligand>
        <name>FAD</name>
        <dbReference type="ChEBI" id="CHEBI:57692"/>
    </ligand>
</feature>
<feature type="disulfide bond" description="Redox-active" evidence="1">
    <location>
        <begin position="58"/>
        <end position="63"/>
    </location>
</feature>
<feature type="splice variant" id="VSP_058343" description="In isoform b." evidence="5">
    <location>
        <begin position="1"/>
        <end position="14"/>
    </location>
</feature>
<keyword id="KW-0025">Alternative splicing</keyword>
<keyword id="KW-0963">Cytoplasm</keyword>
<keyword id="KW-1015">Disulfide bond</keyword>
<keyword id="KW-0274">FAD</keyword>
<keyword id="KW-0285">Flavoprotein</keyword>
<keyword id="KW-0496">Mitochondrion</keyword>
<keyword id="KW-0521">NADP</keyword>
<keyword id="KW-0560">Oxidoreductase</keyword>
<keyword id="KW-0676">Redox-active center</keyword>
<keyword id="KW-1185">Reference proteome</keyword>
<keyword id="KW-0346">Stress response</keyword>
<keyword id="KW-0809">Transit peptide</keyword>
<protein>
    <recommendedName>
        <fullName evidence="1">Glutathione reductase, mitochondrial</fullName>
        <shortName evidence="1">GR</shortName>
        <ecNumber evidence="4">1.8.1.7</ecNumber>
    </recommendedName>
    <alternativeName>
        <fullName evidence="8">Glutathione disulfide reductase</fullName>
    </alternativeName>
</protein>
<name>GSHR_CAEEL</name>
<reference evidence="7" key="1">
    <citation type="journal article" date="1998" name="Science">
        <title>Genome sequence of the nematode C. elegans: a platform for investigating biology.</title>
        <authorList>
            <consortium name="The C. elegans sequencing consortium"/>
        </authorList>
    </citation>
    <scope>NUCLEOTIDE SEQUENCE [LARGE SCALE GENOMIC DNA]</scope>
    <source>
        <strain evidence="7">Bristol N2</strain>
    </source>
</reference>
<reference evidence="5" key="2">
    <citation type="journal article" date="2011" name="Proc. Natl. Acad. Sci. U.S.A.">
        <title>Selenoprotein TRXR-1 and GSR-1 are essential for removal of old cuticle during molting in Caenorhabditis elegans.</title>
        <authorList>
            <person name="Stenvall J."/>
            <person name="Fierro-Gonzalez J.C."/>
            <person name="Swoboda P."/>
            <person name="Saamarthy K."/>
            <person name="Cheng Q."/>
            <person name="Cacho-Valadez B."/>
            <person name="Arner E.S."/>
            <person name="Persson O.P."/>
            <person name="Miranda-Vizuete A."/>
            <person name="Tuck S."/>
        </authorList>
    </citation>
    <scope>FUNCTION</scope>
    <scope>TISSUE SPECIFICITY</scope>
    <scope>DISRUPTION PHENOTYPE</scope>
</reference>
<reference evidence="5" key="3">
    <citation type="journal article" date="2013" name="PLoS ONE">
        <title>The glutathione reductase GSR-1 determines stress tolerance and longevity in Caenorhabditis elegans.</title>
        <authorList>
            <person name="Lueersen K."/>
            <person name="Stegehake D."/>
            <person name="Daniel J."/>
            <person name="Drescher M."/>
            <person name="Ajonina I."/>
            <person name="Ajonina C."/>
            <person name="Hertel P."/>
            <person name="Woltersdorf C."/>
            <person name="Liebau E."/>
        </authorList>
    </citation>
    <scope>FUNCTION</scope>
    <scope>CATALYTIC ACTIVITY</scope>
    <scope>BIOPHYSICOCHEMICAL PROPERTIES</scope>
    <scope>TISSUE SPECIFICITY</scope>
    <scope>INDUCTION BY STARVATION AND JUGLONE</scope>
    <scope>DISRUPTION PHENOTYPE</scope>
</reference>
<dbReference type="EC" id="1.8.1.7" evidence="4"/>
<dbReference type="EMBL" id="BX284603">
    <property type="protein sequence ID" value="CAB03763.1"/>
    <property type="molecule type" value="Genomic_DNA"/>
</dbReference>
<dbReference type="EMBL" id="BX284603">
    <property type="protein sequence ID" value="CAD88214.1"/>
    <property type="molecule type" value="Genomic_DNA"/>
</dbReference>
<dbReference type="PIR" id="T19972">
    <property type="entry name" value="T19972"/>
</dbReference>
<dbReference type="RefSeq" id="NP_001021220.1">
    <molecule id="Q93379-1"/>
    <property type="nucleotide sequence ID" value="NM_001026049.7"/>
</dbReference>
<dbReference type="RefSeq" id="NP_001021221.1">
    <property type="nucleotide sequence ID" value="NM_001026050.2"/>
</dbReference>
<dbReference type="RefSeq" id="NP_001379392.1">
    <molecule id="Q93379-2"/>
    <property type="nucleotide sequence ID" value="NM_001393311.1"/>
</dbReference>
<dbReference type="SMR" id="Q93379"/>
<dbReference type="DIP" id="DIP-27224N"/>
<dbReference type="FunCoup" id="Q93379">
    <property type="interactions" value="1807"/>
</dbReference>
<dbReference type="STRING" id="6239.C46F11.2a.1"/>
<dbReference type="PaxDb" id="6239-C46F11.2a"/>
<dbReference type="PeptideAtlas" id="Q93379"/>
<dbReference type="EnsemblMetazoa" id="C46F11.2a.1">
    <molecule id="Q93379-1"/>
    <property type="protein sequence ID" value="C46F11.2a.1"/>
    <property type="gene ID" value="WBGene00008117"/>
</dbReference>
<dbReference type="EnsemblMetazoa" id="C46F11.2b.1">
    <molecule id="Q93379-2"/>
    <property type="protein sequence ID" value="C46F11.2b.1"/>
    <property type="gene ID" value="WBGene00008117"/>
</dbReference>
<dbReference type="EnsemblMetazoa" id="C46F11.2b.2">
    <molecule id="Q93379-2"/>
    <property type="protein sequence ID" value="C46F11.2b.2"/>
    <property type="gene ID" value="WBGene00008117"/>
</dbReference>
<dbReference type="GeneID" id="175467"/>
<dbReference type="KEGG" id="cel:CELE_C46F11.2"/>
<dbReference type="UCSC" id="C46F11.2a">
    <property type="organism name" value="c. elegans"/>
</dbReference>
<dbReference type="AGR" id="WB:WBGene00008117"/>
<dbReference type="CTD" id="175467"/>
<dbReference type="WormBase" id="C46F11.2a">
    <molecule id="Q93379-1"/>
    <property type="protein sequence ID" value="CE17558"/>
    <property type="gene ID" value="WBGene00008117"/>
    <property type="gene designation" value="gsr-1"/>
</dbReference>
<dbReference type="WormBase" id="C46F11.2b">
    <molecule id="Q93379-2"/>
    <property type="protein sequence ID" value="CE08773"/>
    <property type="gene ID" value="WBGene00008117"/>
    <property type="gene designation" value="gsr-1"/>
</dbReference>
<dbReference type="eggNOG" id="KOG0405">
    <property type="taxonomic scope" value="Eukaryota"/>
</dbReference>
<dbReference type="GeneTree" id="ENSGT00940000156986"/>
<dbReference type="InParanoid" id="Q93379"/>
<dbReference type="OMA" id="MSKHYDY"/>
<dbReference type="OrthoDB" id="5956163at2759"/>
<dbReference type="PhylomeDB" id="Q93379"/>
<dbReference type="BRENDA" id="1.8.1.7">
    <property type="organism ID" value="1045"/>
</dbReference>
<dbReference type="Reactome" id="R-CEL-3299685">
    <property type="pathway name" value="Detoxification of Reactive Oxygen Species"/>
</dbReference>
<dbReference type="Reactome" id="R-CEL-499943">
    <property type="pathway name" value="Interconversion of nucleotide di- and triphosphates"/>
</dbReference>
<dbReference type="Reactome" id="R-CEL-5628897">
    <property type="pathway name" value="TP53 Regulates Metabolic Genes"/>
</dbReference>
<dbReference type="PRO" id="PR:Q93379"/>
<dbReference type="Proteomes" id="UP000001940">
    <property type="component" value="Chromosome III"/>
</dbReference>
<dbReference type="Bgee" id="WBGene00008117">
    <property type="expression patterns" value="Expressed in germ line (C elegans) and 4 other cell types or tissues"/>
</dbReference>
<dbReference type="GO" id="GO:0005737">
    <property type="term" value="C:cytoplasm"/>
    <property type="evidence" value="ECO:0000314"/>
    <property type="project" value="WormBase"/>
</dbReference>
<dbReference type="GO" id="GO:0005829">
    <property type="term" value="C:cytosol"/>
    <property type="evidence" value="ECO:0000314"/>
    <property type="project" value="WormBase"/>
</dbReference>
<dbReference type="GO" id="GO:0005739">
    <property type="term" value="C:mitochondrion"/>
    <property type="evidence" value="ECO:0000314"/>
    <property type="project" value="WormBase"/>
</dbReference>
<dbReference type="GO" id="GO:0050660">
    <property type="term" value="F:flavin adenine dinucleotide binding"/>
    <property type="evidence" value="ECO:0000318"/>
    <property type="project" value="GO_Central"/>
</dbReference>
<dbReference type="GO" id="GO:0004362">
    <property type="term" value="F:glutathione-disulfide reductase (NADPH) activity"/>
    <property type="evidence" value="ECO:0000314"/>
    <property type="project" value="WormBase"/>
</dbReference>
<dbReference type="GO" id="GO:0050661">
    <property type="term" value="F:NADP binding"/>
    <property type="evidence" value="ECO:0007669"/>
    <property type="project" value="InterPro"/>
</dbReference>
<dbReference type="GO" id="GO:0045454">
    <property type="term" value="P:cell redox homeostasis"/>
    <property type="evidence" value="ECO:0000315"/>
    <property type="project" value="WormBase"/>
</dbReference>
<dbReference type="GO" id="GO:0034599">
    <property type="term" value="P:cellular response to oxidative stress"/>
    <property type="evidence" value="ECO:0000318"/>
    <property type="project" value="GO_Central"/>
</dbReference>
<dbReference type="GO" id="GO:0042395">
    <property type="term" value="P:ecdysis, collagen and cuticulin-based cuticle"/>
    <property type="evidence" value="ECO:0000316"/>
    <property type="project" value="WormBase"/>
</dbReference>
<dbReference type="GO" id="GO:0006749">
    <property type="term" value="P:glutathione metabolic process"/>
    <property type="evidence" value="ECO:0000314"/>
    <property type="project" value="WormBase"/>
</dbReference>
<dbReference type="GO" id="GO:0000303">
    <property type="term" value="P:response to superoxide"/>
    <property type="evidence" value="ECO:0000315"/>
    <property type="project" value="WormBase"/>
</dbReference>
<dbReference type="FunFam" id="3.30.390.30:FF:000003">
    <property type="entry name" value="Glutathione reductase"/>
    <property type="match status" value="1"/>
</dbReference>
<dbReference type="FunFam" id="3.50.50.60:FF:000141">
    <property type="entry name" value="Glutathione reductase"/>
    <property type="match status" value="1"/>
</dbReference>
<dbReference type="FunFam" id="3.50.50.60:FF:000484">
    <property type="entry name" value="Glutathione reductase, mitochondrial"/>
    <property type="match status" value="1"/>
</dbReference>
<dbReference type="Gene3D" id="3.30.390.30">
    <property type="match status" value="1"/>
</dbReference>
<dbReference type="Gene3D" id="3.50.50.60">
    <property type="entry name" value="FAD/NAD(P)-binding domain"/>
    <property type="match status" value="2"/>
</dbReference>
<dbReference type="InterPro" id="IPR036188">
    <property type="entry name" value="FAD/NAD-bd_sf"/>
</dbReference>
<dbReference type="InterPro" id="IPR023753">
    <property type="entry name" value="FAD/NAD-binding_dom"/>
</dbReference>
<dbReference type="InterPro" id="IPR016156">
    <property type="entry name" value="FAD/NAD-linked_Rdtase_dimer_sf"/>
</dbReference>
<dbReference type="InterPro" id="IPR006322">
    <property type="entry name" value="Glutathione_Rdtase_euk/bac"/>
</dbReference>
<dbReference type="InterPro" id="IPR046952">
    <property type="entry name" value="GSHR/TRXR-like"/>
</dbReference>
<dbReference type="InterPro" id="IPR001100">
    <property type="entry name" value="Pyr_nuc-diS_OxRdtase"/>
</dbReference>
<dbReference type="InterPro" id="IPR004099">
    <property type="entry name" value="Pyr_nucl-diS_OxRdtase_dimer"/>
</dbReference>
<dbReference type="InterPro" id="IPR012999">
    <property type="entry name" value="Pyr_OxRdtase_I_AS"/>
</dbReference>
<dbReference type="NCBIfam" id="TIGR01421">
    <property type="entry name" value="gluta_reduc_1"/>
    <property type="match status" value="1"/>
</dbReference>
<dbReference type="NCBIfam" id="NF004776">
    <property type="entry name" value="PRK06116.1"/>
    <property type="match status" value="1"/>
</dbReference>
<dbReference type="PANTHER" id="PTHR42737">
    <property type="entry name" value="GLUTATHIONE REDUCTASE"/>
    <property type="match status" value="1"/>
</dbReference>
<dbReference type="PANTHER" id="PTHR42737:SF2">
    <property type="entry name" value="GLUTATHIONE REDUCTASE"/>
    <property type="match status" value="1"/>
</dbReference>
<dbReference type="Pfam" id="PF07992">
    <property type="entry name" value="Pyr_redox_2"/>
    <property type="match status" value="1"/>
</dbReference>
<dbReference type="Pfam" id="PF02852">
    <property type="entry name" value="Pyr_redox_dim"/>
    <property type="match status" value="1"/>
</dbReference>
<dbReference type="PIRSF" id="PIRSF000350">
    <property type="entry name" value="Mercury_reductase_MerA"/>
    <property type="match status" value="1"/>
</dbReference>
<dbReference type="PRINTS" id="PR00368">
    <property type="entry name" value="FADPNR"/>
</dbReference>
<dbReference type="PRINTS" id="PR00411">
    <property type="entry name" value="PNDRDTASEI"/>
</dbReference>
<dbReference type="SUPFAM" id="SSF51905">
    <property type="entry name" value="FAD/NAD(P)-binding domain"/>
    <property type="match status" value="1"/>
</dbReference>
<dbReference type="SUPFAM" id="SSF55424">
    <property type="entry name" value="FAD/NAD-linked reductases, dimerisation (C-terminal) domain"/>
    <property type="match status" value="1"/>
</dbReference>
<dbReference type="PROSITE" id="PS00076">
    <property type="entry name" value="PYRIDINE_REDOX_1"/>
    <property type="match status" value="1"/>
</dbReference>
<gene>
    <name evidence="8" type="primary">gsr-1</name>
    <name evidence="8" type="ORF">C46F11.2</name>
</gene>
<comment type="function">
    <text evidence="3 4">Catalyzes the reduction of glutathione disulfide (GSSG) to reduced glutathione (GSH). Constitutes the major mechanism to maintain a high GSH:GSSG ratio in the cytosol (PubMed:23593298). Involved in resistance to oxidative stress and starvation (PubMed:23593298). Together with thioredoxin reductase txtr-1, required for the reduction of disulfide groups in the cuticle during molting (PubMed:21199936).</text>
</comment>
<comment type="catalytic activity">
    <reaction evidence="4">
        <text>2 glutathione + NADP(+) = glutathione disulfide + NADPH + H(+)</text>
        <dbReference type="Rhea" id="RHEA:11740"/>
        <dbReference type="ChEBI" id="CHEBI:15378"/>
        <dbReference type="ChEBI" id="CHEBI:57783"/>
        <dbReference type="ChEBI" id="CHEBI:57925"/>
        <dbReference type="ChEBI" id="CHEBI:58297"/>
        <dbReference type="ChEBI" id="CHEBI:58349"/>
        <dbReference type="EC" id="1.8.1.7"/>
    </reaction>
</comment>
<comment type="cofactor">
    <cofactor evidence="1">
        <name>FAD</name>
        <dbReference type="ChEBI" id="CHEBI:57692"/>
    </cofactor>
    <text evidence="1">Binds 1 FAD per subunit.</text>
</comment>
<comment type="biophysicochemical properties">
    <kinetics>
        <KM evidence="4">34.1 uM for glutathione disulfide (at 25 degrees Celsius)</KM>
        <KM evidence="4">12.9 uM for NADPH (at 25 degrees Celsius)</KM>
    </kinetics>
</comment>
<comment type="subcellular location">
    <subcellularLocation>
        <location evidence="6">Cytoplasm</location>
    </subcellularLocation>
    <subcellularLocation>
        <location evidence="1">Mitochondrion</location>
    </subcellularLocation>
</comment>
<comment type="alternative products">
    <event type="alternative splicing"/>
    <isoform>
        <id>Q93379-1</id>
        <name evidence="8">a</name>
        <sequence type="displayed"/>
    </isoform>
    <isoform>
        <id>Q93379-2</id>
        <name evidence="9">b</name>
        <sequence type="described" ref="VSP_058343"/>
    </isoform>
</comment>
<comment type="tissue specificity">
    <text evidence="3 4">Expressed at all larval stages and in adults in intestine, vulva muscle, pharynx and some cells in the tail.</text>
</comment>
<comment type="induction">
    <text evidence="4">Induced by the oxidant juglone and starvation.</text>
</comment>
<comment type="disruption phenotype">
    <text evidence="3 4">RNAi-mediated knockdown causes a severe decrease in survival upon treatment with oxidants including juglone, paraquat and to a lesser extent, cumen and tert-butylhydroperoxide (tBOOH). Enhances further the production of gamma-glutamylycysteine and glutathione disulfide upon juglone treatment. Increases gst-4 and gcs-1 expression. Reduces lifespan (PubMed:23593298). RNAi-mediated knockdown in a trxr-1 mutant background causes an arrest during larval molting characterized by a partial detachment of the old cuticle and an impaired ability to reduce cuticle components (PubMed:21199936).</text>
</comment>
<comment type="similarity">
    <text evidence="2">Belongs to the class-I pyridine nucleotide-disulfide oxidoreductase family.</text>
</comment>